<proteinExistence type="evidence at protein level"/>
<dbReference type="SMR" id="P82901"/>
<dbReference type="Allergome" id="8724">
    <property type="allergen name" value="Tri a 7k-LTP"/>
</dbReference>
<dbReference type="PaxDb" id="4565-Traes_4DL_B0E273752.1"/>
<dbReference type="Proteomes" id="UP000019116">
    <property type="component" value="Unplaced"/>
</dbReference>
<dbReference type="ExpressionAtlas" id="P82901">
    <property type="expression patterns" value="baseline"/>
</dbReference>
<dbReference type="GO" id="GO:0008289">
    <property type="term" value="F:lipid binding"/>
    <property type="evidence" value="ECO:0007669"/>
    <property type="project" value="UniProtKB-KW"/>
</dbReference>
<dbReference type="GO" id="GO:0006869">
    <property type="term" value="P:lipid transport"/>
    <property type="evidence" value="ECO:0007669"/>
    <property type="project" value="UniProtKB-KW"/>
</dbReference>
<dbReference type="CDD" id="cd01959">
    <property type="entry name" value="nsLTP2"/>
    <property type="match status" value="1"/>
</dbReference>
<dbReference type="Gene3D" id="1.10.110.10">
    <property type="entry name" value="Plant lipid-transfer and hydrophobic proteins"/>
    <property type="match status" value="1"/>
</dbReference>
<dbReference type="InterPro" id="IPR036312">
    <property type="entry name" value="Bifun_inhib/LTP/seed_sf"/>
</dbReference>
<dbReference type="InterPro" id="IPR016140">
    <property type="entry name" value="Bifunc_inhib/LTP/seed_store"/>
</dbReference>
<dbReference type="InterPro" id="IPR033872">
    <property type="entry name" value="nsLTP2"/>
</dbReference>
<dbReference type="PANTHER" id="PTHR33214">
    <property type="entry name" value="BIFUNCTIONAL INHIBITOR/LIPID-TRANSFER PROTEIN/SEED STORAGE 2S ALBUMIN SUPERFAMILY PROTEIN"/>
    <property type="match status" value="1"/>
</dbReference>
<dbReference type="PANTHER" id="PTHR33214:SF34">
    <property type="entry name" value="NON-SPECIFIC LIPID-TRANSFER PROTEIN 2"/>
    <property type="match status" value="1"/>
</dbReference>
<dbReference type="Pfam" id="PF00234">
    <property type="entry name" value="Tryp_alpha_amyl"/>
    <property type="match status" value="1"/>
</dbReference>
<dbReference type="SUPFAM" id="SSF47699">
    <property type="entry name" value="Bifunctional inhibitor/lipid-transfer protein/seed storage 2S albumin"/>
    <property type="match status" value="1"/>
</dbReference>
<reference evidence="3" key="1">
    <citation type="journal article" date="2001" name="Eur. J. Biochem.">
        <title>Disulfide bond assignment, lipid transfer activity and secondary structure of a 7-kDa plant lipid transfer protein, LTP2.</title>
        <authorList>
            <person name="Douliez J.-P."/>
            <person name="Pato C."/>
            <person name="Rabesona H."/>
            <person name="Molle D."/>
            <person name="Marion D."/>
        </authorList>
    </citation>
    <scope>PROTEIN SEQUENCE</scope>
    <scope>FUNCTION</scope>
    <scope>MASS SPECTROMETRY</scope>
    <scope>DISULFIDE BONDS</scope>
    <source>
        <tissue>Endosperm</tissue>
    </source>
</reference>
<name>NLT2P_WHEAT</name>
<comment type="function">
    <text evidence="1 2">Transfer lipids across membranes. May play a role in plant defense or in the biosynthesis of cuticle layers.</text>
</comment>
<comment type="mass spectrometry" mass="7038.0" error="1.0" method="Electrospray" evidence="1"/>
<comment type="similarity">
    <text evidence="3">Belongs to the plant LTP family. B11E subfamily.</text>
</comment>
<evidence type="ECO:0000269" key="1">
    <source>
    </source>
</evidence>
<evidence type="ECO:0000303" key="2">
    <source>
    </source>
</evidence>
<evidence type="ECO:0000305" key="3"/>
<sequence length="67" mass="7046">ACQASQLAVCASAILSGAKPSGECCGNLRAQQPCFCQYAKDPTYGQYIRSPHARDTLQSCGLAVPHC</sequence>
<organism evidence="3">
    <name type="scientific">Triticum aestivum</name>
    <name type="common">Wheat</name>
    <dbReference type="NCBI Taxonomy" id="4565"/>
    <lineage>
        <taxon>Eukaryota</taxon>
        <taxon>Viridiplantae</taxon>
        <taxon>Streptophyta</taxon>
        <taxon>Embryophyta</taxon>
        <taxon>Tracheophyta</taxon>
        <taxon>Spermatophyta</taxon>
        <taxon>Magnoliopsida</taxon>
        <taxon>Liliopsida</taxon>
        <taxon>Poales</taxon>
        <taxon>Poaceae</taxon>
        <taxon>BOP clade</taxon>
        <taxon>Pooideae</taxon>
        <taxon>Triticodae</taxon>
        <taxon>Triticeae</taxon>
        <taxon>Triticinae</taxon>
        <taxon>Triticum</taxon>
    </lineage>
</organism>
<feature type="chain" id="PRO_0000153894" description="Non-specific lipid-transfer protein 2P">
    <location>
        <begin position="1"/>
        <end position="67"/>
    </location>
</feature>
<feature type="disulfide bond" evidence="1">
    <location>
        <begin position="2"/>
        <end position="34"/>
    </location>
</feature>
<feature type="disulfide bond" evidence="1">
    <location>
        <begin position="10"/>
        <end position="24"/>
    </location>
</feature>
<feature type="disulfide bond" evidence="1">
    <location>
        <begin position="25"/>
        <end position="60"/>
    </location>
</feature>
<feature type="disulfide bond" evidence="1">
    <location>
        <begin position="36"/>
        <end position="67"/>
    </location>
</feature>
<keyword id="KW-0903">Direct protein sequencing</keyword>
<keyword id="KW-1015">Disulfide bond</keyword>
<keyword id="KW-0445">Lipid transport</keyword>
<keyword id="KW-0446">Lipid-binding</keyword>
<keyword id="KW-1185">Reference proteome</keyword>
<keyword id="KW-0813">Transport</keyword>
<protein>
    <recommendedName>
        <fullName>Non-specific lipid-transfer protein 2P</fullName>
        <shortName>LTP2P</shortName>
    </recommendedName>
    <alternativeName>
        <fullName>7 kDa lipid transfer protein 2</fullName>
    </alternativeName>
    <alternativeName>
        <fullName>Lipid transfer protein 2 isoform 2</fullName>
        <shortName>LTP2-2</shortName>
    </alternativeName>
</protein>
<accession>P82901</accession>